<evidence type="ECO:0000255" key="1"/>
<evidence type="ECO:0000305" key="2"/>
<name>Y788_ARCFU</name>
<protein>
    <recommendedName>
        <fullName>Uncharacterized transporter AF_0788</fullName>
    </recommendedName>
</protein>
<organism>
    <name type="scientific">Archaeoglobus fulgidus (strain ATCC 49558 / DSM 4304 / JCM 9628 / NBRC 100126 / VC-16)</name>
    <dbReference type="NCBI Taxonomy" id="224325"/>
    <lineage>
        <taxon>Archaea</taxon>
        <taxon>Methanobacteriati</taxon>
        <taxon>Methanobacteriota</taxon>
        <taxon>Archaeoglobi</taxon>
        <taxon>Archaeoglobales</taxon>
        <taxon>Archaeoglobaceae</taxon>
        <taxon>Archaeoglobus</taxon>
    </lineage>
</organism>
<gene>
    <name type="ordered locus">AF_0788</name>
</gene>
<accession>O29470</accession>
<proteinExistence type="inferred from homology"/>
<dbReference type="EMBL" id="AE000782">
    <property type="protein sequence ID" value="AAB90451.1"/>
    <property type="molecule type" value="Genomic_DNA"/>
</dbReference>
<dbReference type="PIR" id="D69348">
    <property type="entry name" value="D69348"/>
</dbReference>
<dbReference type="SMR" id="O29470"/>
<dbReference type="STRING" id="224325.AF_0788"/>
<dbReference type="PaxDb" id="224325-AF_0788"/>
<dbReference type="EnsemblBacteria" id="AAB90451">
    <property type="protein sequence ID" value="AAB90451"/>
    <property type="gene ID" value="AF_0788"/>
</dbReference>
<dbReference type="KEGG" id="afu:AF_0788"/>
<dbReference type="eggNOG" id="arCOG00271">
    <property type="taxonomic scope" value="Archaea"/>
</dbReference>
<dbReference type="HOGENOM" id="CLU_033863_21_3_2"/>
<dbReference type="OrthoDB" id="17861at2157"/>
<dbReference type="PhylomeDB" id="O29470"/>
<dbReference type="Proteomes" id="UP000002199">
    <property type="component" value="Chromosome"/>
</dbReference>
<dbReference type="GO" id="GO:0005886">
    <property type="term" value="C:plasma membrane"/>
    <property type="evidence" value="ECO:0007669"/>
    <property type="project" value="UniProtKB-SubCell"/>
</dbReference>
<dbReference type="InterPro" id="IPR051258">
    <property type="entry name" value="Diverse_Substrate_Transporter"/>
</dbReference>
<dbReference type="InterPro" id="IPR000620">
    <property type="entry name" value="EamA_dom"/>
</dbReference>
<dbReference type="PANTHER" id="PTHR42920:SF5">
    <property type="entry name" value="EAMA DOMAIN-CONTAINING PROTEIN"/>
    <property type="match status" value="1"/>
</dbReference>
<dbReference type="PANTHER" id="PTHR42920">
    <property type="entry name" value="OS03G0707200 PROTEIN-RELATED"/>
    <property type="match status" value="1"/>
</dbReference>
<dbReference type="Pfam" id="PF00892">
    <property type="entry name" value="EamA"/>
    <property type="match status" value="2"/>
</dbReference>
<dbReference type="SUPFAM" id="SSF103481">
    <property type="entry name" value="Multidrug resistance efflux transporter EmrE"/>
    <property type="match status" value="2"/>
</dbReference>
<feature type="chain" id="PRO_0000108203" description="Uncharacterized transporter AF_0788">
    <location>
        <begin position="1"/>
        <end position="308"/>
    </location>
</feature>
<feature type="transmembrane region" description="Helical" evidence="1">
    <location>
        <begin position="45"/>
        <end position="65"/>
    </location>
</feature>
<feature type="transmembrane region" description="Helical" evidence="1">
    <location>
        <begin position="69"/>
        <end position="89"/>
    </location>
</feature>
<feature type="transmembrane region" description="Helical" evidence="1">
    <location>
        <begin position="100"/>
        <end position="120"/>
    </location>
</feature>
<feature type="transmembrane region" description="Helical" evidence="1">
    <location>
        <begin position="122"/>
        <end position="142"/>
    </location>
</feature>
<feature type="transmembrane region" description="Helical" evidence="1">
    <location>
        <begin position="151"/>
        <end position="171"/>
    </location>
</feature>
<feature type="transmembrane region" description="Helical" evidence="1">
    <location>
        <begin position="172"/>
        <end position="192"/>
    </location>
</feature>
<feature type="transmembrane region" description="Helical" evidence="1">
    <location>
        <begin position="201"/>
        <end position="221"/>
    </location>
</feature>
<feature type="transmembrane region" description="Helical" evidence="1">
    <location>
        <begin position="226"/>
        <end position="246"/>
    </location>
</feature>
<feature type="transmembrane region" description="Helical" evidence="1">
    <location>
        <begin position="263"/>
        <end position="283"/>
    </location>
</feature>
<feature type="transmembrane region" description="Helical" evidence="1">
    <location>
        <begin position="285"/>
        <end position="305"/>
    </location>
</feature>
<feature type="domain" description="EamA 1">
    <location>
        <begin position="52"/>
        <end position="166"/>
    </location>
</feature>
<feature type="domain" description="EamA 2">
    <location>
        <begin position="178"/>
        <end position="306"/>
    </location>
</feature>
<keyword id="KW-1003">Cell membrane</keyword>
<keyword id="KW-0472">Membrane</keyword>
<keyword id="KW-1185">Reference proteome</keyword>
<keyword id="KW-0677">Repeat</keyword>
<keyword id="KW-0812">Transmembrane</keyword>
<keyword id="KW-1133">Transmembrane helix</keyword>
<keyword id="KW-0813">Transport</keyword>
<comment type="subcellular location">
    <subcellularLocation>
        <location evidence="2">Cell membrane</location>
        <topology evidence="2">Multi-pass membrane protein</topology>
    </subcellularLocation>
</comment>
<comment type="similarity">
    <text evidence="2">Belongs to the EamA transporter family.</text>
</comment>
<reference key="1">
    <citation type="journal article" date="1997" name="Nature">
        <title>The complete genome sequence of the hyperthermophilic, sulphate-reducing archaeon Archaeoglobus fulgidus.</title>
        <authorList>
            <person name="Klenk H.-P."/>
            <person name="Clayton R.A."/>
            <person name="Tomb J.-F."/>
            <person name="White O."/>
            <person name="Nelson K.E."/>
            <person name="Ketchum K.A."/>
            <person name="Dodson R.J."/>
            <person name="Gwinn M.L."/>
            <person name="Hickey E.K."/>
            <person name="Peterson J.D."/>
            <person name="Richardson D.L."/>
            <person name="Kerlavage A.R."/>
            <person name="Graham D.E."/>
            <person name="Kyrpides N.C."/>
            <person name="Fleischmann R.D."/>
            <person name="Quackenbush J."/>
            <person name="Lee N.H."/>
            <person name="Sutton G.G."/>
            <person name="Gill S.R."/>
            <person name="Kirkness E.F."/>
            <person name="Dougherty B.A."/>
            <person name="McKenney K."/>
            <person name="Adams M.D."/>
            <person name="Loftus B.J."/>
            <person name="Peterson S.N."/>
            <person name="Reich C.I."/>
            <person name="McNeil L.K."/>
            <person name="Badger J.H."/>
            <person name="Glodek A."/>
            <person name="Zhou L."/>
            <person name="Overbeek R."/>
            <person name="Gocayne J.D."/>
            <person name="Weidman J.F."/>
            <person name="McDonald L.A."/>
            <person name="Utterback T.R."/>
            <person name="Cotton M.D."/>
            <person name="Spriggs T."/>
            <person name="Artiach P."/>
            <person name="Kaine B.P."/>
            <person name="Sykes S.M."/>
            <person name="Sadow P.W."/>
            <person name="D'Andrea K.P."/>
            <person name="Bowman C."/>
            <person name="Fujii C."/>
            <person name="Garland S.A."/>
            <person name="Mason T.M."/>
            <person name="Olsen G.J."/>
            <person name="Fraser C.M."/>
            <person name="Smith H.O."/>
            <person name="Woese C.R."/>
            <person name="Venter J.C."/>
        </authorList>
    </citation>
    <scope>NUCLEOTIDE SEQUENCE [LARGE SCALE GENOMIC DNA]</scope>
    <source>
        <strain>ATCC 49558 / DSM 4304 / JCM 9628 / NBRC 100126 / VC-16</strain>
    </source>
</reference>
<sequence length="308" mass="34282">MGEDRRSLRVDYDDNFLRNNICSLKVSFIKQQGGAEGVKRLYADLGLALVALIWGSTFPVVKIALDSMSPFAFNTVRFFIACLFFLPFLKGWDFKDGFKIGIASFLGYTFQTVGLDYTTATNAGFITSTYVVLAPIISWLVYKDVFDKRDVSGVLLAFVGFYFLSGYSGFNIGDILMLFCALFFGAEIAMISHYSRLSNPTMLAFWQSFAIFILSAPFAVFTTTKFEINTTVILCLLITAFFATFVAKMLQNWLQSYTKSSDAAVILSLEGVFAHLFSVAVLAEILTPVQYFGAFLILLAVIIVSLRV</sequence>